<gene>
    <name evidence="2" type="primary">GPI</name>
    <name evidence="5" type="ORF">QccE-13068</name>
</gene>
<sequence length="558" mass="63151">MAALTRDPQFQKLQQWYREHGSELNLRRLFDADKDRFNHFSLTLNTNHGHILLDYSKNLVTEDVMRMLVDLAKSRGVEAARERMFNGEKINYTEGRAVLHVALRNRSNTPILVDGKDVMPEVNKVLDKMKSFCQRVRSGDWKGYTGKTITDVINIGIGGSDLGPLMVTEALKPYSSEGPRVWYVSNIDGTHIAKTLTQLNPESSLFIIASKTFTTQETITNAETAKEWFLQAAKDPSAVAKHFVALSTNTTKVKEFGIDPQNMFEFWDWVGGRYSLWSAIGLSIALHVGFDNFEQLLSGAHWMDQHFRTTPLEKNAPVLLALLGIWYINCFGCETHAMLPYDQYLHRFAAYFQQGDMESNGKYITKSGTRVDHQTGPIVWGEPGTNGQHAFYQLIHQGTKMIPCDFLIPVQTQHPIRKGLHHKILLANFLAQTEALMRGKSTDEARKELQAAGKSPEDLERLLPHKVFEGNRPTNSIVFTKLTPFMLGALVAMYEHKIFVQGIIWDINSFDQWGVELGKQLAKKIEPELDGSAQVTSHDASTNGLINFIKQQREARVQ</sequence>
<evidence type="ECO:0000250" key="1"/>
<evidence type="ECO:0000250" key="2">
    <source>
        <dbReference type="UniProtKB" id="P06744"/>
    </source>
</evidence>
<evidence type="ECO:0000250" key="3">
    <source>
        <dbReference type="UniProtKB" id="P06745"/>
    </source>
</evidence>
<evidence type="ECO:0000250" key="4">
    <source>
        <dbReference type="UniProtKB" id="Q6P6V0"/>
    </source>
</evidence>
<evidence type="ECO:0000303" key="5">
    <source ref="1"/>
</evidence>
<evidence type="ECO:0000305" key="6"/>
<feature type="initiator methionine" description="Removed" evidence="2">
    <location>
        <position position="1"/>
    </location>
</feature>
<feature type="chain" id="PRO_0000226295" description="Glucose-6-phosphate isomerase">
    <location>
        <begin position="2"/>
        <end position="558"/>
    </location>
</feature>
<feature type="active site" description="Proton donor" evidence="3">
    <location>
        <position position="358"/>
    </location>
</feature>
<feature type="active site" evidence="3">
    <location>
        <position position="389"/>
    </location>
</feature>
<feature type="active site" evidence="3">
    <location>
        <position position="519"/>
    </location>
</feature>
<feature type="binding site" evidence="3">
    <location>
        <begin position="159"/>
        <end position="160"/>
    </location>
    <ligand>
        <name>D-glucose 6-phosphate</name>
        <dbReference type="ChEBI" id="CHEBI:61548"/>
    </ligand>
</feature>
<feature type="binding site" evidence="3">
    <location>
        <begin position="210"/>
        <end position="215"/>
    </location>
    <ligand>
        <name>D-glucose 6-phosphate</name>
        <dbReference type="ChEBI" id="CHEBI:61548"/>
    </ligand>
</feature>
<feature type="binding site" evidence="3">
    <location>
        <position position="354"/>
    </location>
    <ligand>
        <name>D-glucose 6-phosphate</name>
        <dbReference type="ChEBI" id="CHEBI:61548"/>
    </ligand>
</feature>
<feature type="binding site" evidence="3">
    <location>
        <position position="358"/>
    </location>
    <ligand>
        <name>D-glucose 6-phosphate</name>
        <dbReference type="ChEBI" id="CHEBI:61548"/>
    </ligand>
</feature>
<feature type="binding site" evidence="3">
    <location>
        <position position="389"/>
    </location>
    <ligand>
        <name>D-glucose 6-phosphate</name>
        <dbReference type="ChEBI" id="CHEBI:61548"/>
    </ligand>
</feature>
<feature type="binding site" evidence="3">
    <location>
        <position position="519"/>
    </location>
    <ligand>
        <name>D-glucose 6-phosphate</name>
        <dbReference type="ChEBI" id="CHEBI:61548"/>
    </ligand>
</feature>
<feature type="modified residue" description="N-acetylalanine" evidence="2">
    <location>
        <position position="2"/>
    </location>
</feature>
<feature type="modified residue" description="N6-acetyllysine" evidence="2">
    <location>
        <position position="12"/>
    </location>
</feature>
<feature type="modified residue" description="N6-(2-hydroxyisobutyryl)lysine" evidence="2">
    <location>
        <position position="34"/>
    </location>
</feature>
<feature type="modified residue" description="Phosphoserine" evidence="2">
    <location>
        <position position="107"/>
    </location>
</feature>
<feature type="modified residue" description="Phosphothreonine" evidence="2">
    <location>
        <position position="109"/>
    </location>
</feature>
<feature type="modified residue" description="N6-acetyllysine" evidence="2">
    <location>
        <position position="142"/>
    </location>
</feature>
<feature type="modified residue" description="Phosphoserine; by CK2" evidence="2">
    <location>
        <position position="185"/>
    </location>
</feature>
<feature type="modified residue" description="Phosphothreonine" evidence="4">
    <location>
        <position position="250"/>
    </location>
</feature>
<feature type="modified residue" description="N6-acetyllysine; alternate" evidence="3">
    <location>
        <position position="454"/>
    </location>
</feature>
<feature type="modified residue" description="N6-malonyllysine; alternate" evidence="1">
    <location>
        <position position="454"/>
    </location>
</feature>
<feature type="modified residue" description="N6-succinyllysine; alternate" evidence="3">
    <location>
        <position position="454"/>
    </location>
</feature>
<feature type="modified residue" description="Phosphoserine" evidence="2">
    <location>
        <position position="455"/>
    </location>
</feature>
<name>G6PI_MACFA</name>
<proteinExistence type="evidence at transcript level"/>
<protein>
    <recommendedName>
        <fullName evidence="2">Glucose-6-phosphate isomerase</fullName>
        <shortName evidence="2">GPI</shortName>
        <ecNumber evidence="3">5.3.1.9</ecNumber>
    </recommendedName>
    <alternativeName>
        <fullName evidence="2">Autocrine motility factor</fullName>
        <shortName evidence="2">AMF</shortName>
    </alternativeName>
    <alternativeName>
        <fullName evidence="2">Neuroleukin</fullName>
        <shortName evidence="2">NLK</shortName>
    </alternativeName>
    <alternativeName>
        <fullName evidence="2">Phosphoglucose isomerase</fullName>
        <shortName evidence="2">PGI</shortName>
    </alternativeName>
    <alternativeName>
        <fullName>Phosphohexose isomerase</fullName>
        <shortName evidence="2">PHI</shortName>
    </alternativeName>
</protein>
<organism>
    <name type="scientific">Macaca fascicularis</name>
    <name type="common">Crab-eating macaque</name>
    <name type="synonym">Cynomolgus monkey</name>
    <dbReference type="NCBI Taxonomy" id="9541"/>
    <lineage>
        <taxon>Eukaryota</taxon>
        <taxon>Metazoa</taxon>
        <taxon>Chordata</taxon>
        <taxon>Craniata</taxon>
        <taxon>Vertebrata</taxon>
        <taxon>Euteleostomi</taxon>
        <taxon>Mammalia</taxon>
        <taxon>Eutheria</taxon>
        <taxon>Euarchontoglires</taxon>
        <taxon>Primates</taxon>
        <taxon>Haplorrhini</taxon>
        <taxon>Catarrhini</taxon>
        <taxon>Cercopithecidae</taxon>
        <taxon>Cercopithecinae</taxon>
        <taxon>Macaca</taxon>
    </lineage>
</organism>
<accession>Q4R591</accession>
<comment type="function">
    <text evidence="2 3">In the cytoplasm, catalyzes the conversion of glucose-6-phosphate to fructose-6-phosphate, the second step in glycolysis, and the reverse reaction during gluconeogenesis (By similarity). Besides it's role as a glycolytic enzyme, also acts as a secreted cytokine: acts as an angiogenic factor (AMF) that stimulates endothelial cell motility. Acts as a neurotrophic factor, neuroleukin, for spinal and sensory neurons. It is secreted by lectin-stimulated T-cells and induces immunoglobulin secretion (By similarity).</text>
</comment>
<comment type="catalytic activity">
    <reaction evidence="2">
        <text>alpha-D-glucose 6-phosphate = beta-D-fructose 6-phosphate</text>
        <dbReference type="Rhea" id="RHEA:11816"/>
        <dbReference type="ChEBI" id="CHEBI:57634"/>
        <dbReference type="ChEBI" id="CHEBI:58225"/>
        <dbReference type="EC" id="5.3.1.9"/>
    </reaction>
</comment>
<comment type="pathway">
    <text evidence="2">Carbohydrate degradation; glycolysis; D-glyceraldehyde 3-phosphate and glycerone phosphate from D-glucose: step 2/4.</text>
</comment>
<comment type="subunit">
    <text evidence="2">Homodimer; in the catalytically active form. Monomer in the secreted form.</text>
</comment>
<comment type="subcellular location">
    <subcellularLocation>
        <location evidence="2">Cytoplasm</location>
    </subcellularLocation>
    <subcellularLocation>
        <location evidence="2">Secreted</location>
    </subcellularLocation>
</comment>
<comment type="PTM">
    <text evidence="2">Phosphorylation at Ser-185 by CK2 has been shown to decrease enzymatic activity and may contribute to secretion by a non-classical secretory pathway.</text>
</comment>
<comment type="PTM">
    <text evidence="2">ISGylated.</text>
</comment>
<comment type="similarity">
    <text evidence="6">Belongs to the GPI family.</text>
</comment>
<keyword id="KW-0007">Acetylation</keyword>
<keyword id="KW-0202">Cytokine</keyword>
<keyword id="KW-0963">Cytoplasm</keyword>
<keyword id="KW-0312">Gluconeogenesis</keyword>
<keyword id="KW-0324">Glycolysis</keyword>
<keyword id="KW-0379">Hydroxylation</keyword>
<keyword id="KW-0413">Isomerase</keyword>
<keyword id="KW-0597">Phosphoprotein</keyword>
<keyword id="KW-1185">Reference proteome</keyword>
<keyword id="KW-0964">Secreted</keyword>
<keyword id="KW-0832">Ubl conjugation</keyword>
<reference key="1">
    <citation type="submission" date="2005-06" db="EMBL/GenBank/DDBJ databases">
        <title>DNA sequences of macaque genes expressed in brain or testis and its evolutionary implications.</title>
        <authorList>
            <consortium name="International consortium for macaque cDNA sequencing and analysis"/>
        </authorList>
    </citation>
    <scope>NUCLEOTIDE SEQUENCE [LARGE SCALE MRNA]</scope>
    <source>
        <tissue>Brain cortex</tissue>
    </source>
</reference>
<dbReference type="EC" id="5.3.1.9" evidence="3"/>
<dbReference type="EMBL" id="AB169653">
    <property type="protein sequence ID" value="BAE01734.1"/>
    <property type="molecule type" value="mRNA"/>
</dbReference>
<dbReference type="SMR" id="Q4R591"/>
<dbReference type="STRING" id="9541.ENSMFAP00000031897"/>
<dbReference type="Ensembl" id="ENSMFAT00000006117.2">
    <property type="protein sequence ID" value="ENSMFAP00000031897.2"/>
    <property type="gene ID" value="ENSMFAG00000036975.2"/>
</dbReference>
<dbReference type="eggNOG" id="KOG2446">
    <property type="taxonomic scope" value="Eukaryota"/>
</dbReference>
<dbReference type="GeneTree" id="ENSGT00390000000707"/>
<dbReference type="UniPathway" id="UPA00109">
    <property type="reaction ID" value="UER00181"/>
</dbReference>
<dbReference type="Proteomes" id="UP000233100">
    <property type="component" value="Chromosome 19"/>
</dbReference>
<dbReference type="Bgee" id="ENSMFAG00000036975">
    <property type="expression patterns" value="Expressed in skeletal muscle tissue and 13 other cell types or tissues"/>
</dbReference>
<dbReference type="GO" id="GO:0005829">
    <property type="term" value="C:cytosol"/>
    <property type="evidence" value="ECO:0007669"/>
    <property type="project" value="TreeGrafter"/>
</dbReference>
<dbReference type="GO" id="GO:0005615">
    <property type="term" value="C:extracellular space"/>
    <property type="evidence" value="ECO:0007669"/>
    <property type="project" value="UniProtKB-KW"/>
</dbReference>
<dbReference type="GO" id="GO:0097367">
    <property type="term" value="F:carbohydrate derivative binding"/>
    <property type="evidence" value="ECO:0007669"/>
    <property type="project" value="InterPro"/>
</dbReference>
<dbReference type="GO" id="GO:0005125">
    <property type="term" value="F:cytokine activity"/>
    <property type="evidence" value="ECO:0007669"/>
    <property type="project" value="UniProtKB-KW"/>
</dbReference>
<dbReference type="GO" id="GO:0004347">
    <property type="term" value="F:glucose-6-phosphate isomerase activity"/>
    <property type="evidence" value="ECO:0000250"/>
    <property type="project" value="UniProtKB"/>
</dbReference>
<dbReference type="GO" id="GO:0048029">
    <property type="term" value="F:monosaccharide binding"/>
    <property type="evidence" value="ECO:0007669"/>
    <property type="project" value="TreeGrafter"/>
</dbReference>
<dbReference type="GO" id="GO:0006094">
    <property type="term" value="P:gluconeogenesis"/>
    <property type="evidence" value="ECO:0007669"/>
    <property type="project" value="UniProtKB-KW"/>
</dbReference>
<dbReference type="GO" id="GO:0051156">
    <property type="term" value="P:glucose 6-phosphate metabolic process"/>
    <property type="evidence" value="ECO:0000250"/>
    <property type="project" value="UniProtKB"/>
</dbReference>
<dbReference type="GO" id="GO:0006096">
    <property type="term" value="P:glycolytic process"/>
    <property type="evidence" value="ECO:0007669"/>
    <property type="project" value="UniProtKB-UniPathway"/>
</dbReference>
<dbReference type="CDD" id="cd05015">
    <property type="entry name" value="SIS_PGI_1"/>
    <property type="match status" value="1"/>
</dbReference>
<dbReference type="CDD" id="cd05016">
    <property type="entry name" value="SIS_PGI_2"/>
    <property type="match status" value="1"/>
</dbReference>
<dbReference type="FunFam" id="1.10.1390.10:FF:000001">
    <property type="entry name" value="Glucose-6-phosphate isomerase"/>
    <property type="match status" value="1"/>
</dbReference>
<dbReference type="FunFam" id="3.40.50.10490:FF:000004">
    <property type="entry name" value="Glucose-6-phosphate isomerase"/>
    <property type="match status" value="1"/>
</dbReference>
<dbReference type="FunFam" id="3.40.50.10490:FF:000093">
    <property type="entry name" value="Glucose-6-phosphate isomerase"/>
    <property type="match status" value="1"/>
</dbReference>
<dbReference type="Gene3D" id="1.10.1390.10">
    <property type="match status" value="1"/>
</dbReference>
<dbReference type="Gene3D" id="3.40.50.10490">
    <property type="entry name" value="Glucose-6-phosphate isomerase like protein, domain 1"/>
    <property type="match status" value="2"/>
</dbReference>
<dbReference type="HAMAP" id="MF_00473">
    <property type="entry name" value="G6P_isomerase"/>
    <property type="match status" value="1"/>
</dbReference>
<dbReference type="InterPro" id="IPR001672">
    <property type="entry name" value="G6P_Isomerase"/>
</dbReference>
<dbReference type="InterPro" id="IPR023096">
    <property type="entry name" value="G6P_Isomerase_C"/>
</dbReference>
<dbReference type="InterPro" id="IPR018189">
    <property type="entry name" value="Phosphoglucose_isomerase_CS"/>
</dbReference>
<dbReference type="InterPro" id="IPR046348">
    <property type="entry name" value="SIS_dom_sf"/>
</dbReference>
<dbReference type="InterPro" id="IPR035476">
    <property type="entry name" value="SIS_PGI_1"/>
</dbReference>
<dbReference type="InterPro" id="IPR035482">
    <property type="entry name" value="SIS_PGI_2"/>
</dbReference>
<dbReference type="NCBIfam" id="NF001211">
    <property type="entry name" value="PRK00179.1"/>
    <property type="match status" value="1"/>
</dbReference>
<dbReference type="PANTHER" id="PTHR11469">
    <property type="entry name" value="GLUCOSE-6-PHOSPHATE ISOMERASE"/>
    <property type="match status" value="1"/>
</dbReference>
<dbReference type="PANTHER" id="PTHR11469:SF1">
    <property type="entry name" value="GLUCOSE-6-PHOSPHATE ISOMERASE"/>
    <property type="match status" value="1"/>
</dbReference>
<dbReference type="Pfam" id="PF00342">
    <property type="entry name" value="PGI"/>
    <property type="match status" value="1"/>
</dbReference>
<dbReference type="PRINTS" id="PR00662">
    <property type="entry name" value="G6PISOMERASE"/>
</dbReference>
<dbReference type="SUPFAM" id="SSF53697">
    <property type="entry name" value="SIS domain"/>
    <property type="match status" value="1"/>
</dbReference>
<dbReference type="PROSITE" id="PS00765">
    <property type="entry name" value="P_GLUCOSE_ISOMERASE_1"/>
    <property type="match status" value="1"/>
</dbReference>
<dbReference type="PROSITE" id="PS00174">
    <property type="entry name" value="P_GLUCOSE_ISOMERASE_2"/>
    <property type="match status" value="1"/>
</dbReference>
<dbReference type="PROSITE" id="PS51463">
    <property type="entry name" value="P_GLUCOSE_ISOMERASE_3"/>
    <property type="match status" value="1"/>
</dbReference>